<accession>Q62EP0</accession>
<sequence>MNIVILAAGTGKRMRSALPKVLHPLAGRPLLSHVIDTARALAPSRLVVVIGHGAEQVRAAVAAPDVQFAVQEQQLGTGHAVRQALPLLDPSQPTLVLYGDVPLTRTATLKRLADAATDARYGVLTVTLDDPTGYGRIVRDQAGCVTRIVEQKDASPDELRIDEINTGIVVAPTAQLSMWLGALGNDNAQGEYYLTDVVEQAIEAGFEIVTTQPDDEWETLGVNSKAQLAELERIHQRNLADALLAAGVTLADPARIDVRGTLACGRDVSIDVNCVFEGDVTLADGVTIGANCVIRHAAIAAGARVDAFSHLDGATVGANAVVGPYARLRPGAVLAADAHVGNFVEVKNATLGQGSKANHLTYLGDADIGARVNVGAGTITCNYDGANKFRTVIEDDVFVGSDTQFVAPVRVGRGVTVAAGTTVWKDVAADMLVLNDKTQTAKSGYVRPVKKKS</sequence>
<gene>
    <name evidence="1" type="primary">glmU</name>
    <name type="ordered locus">BMA3380</name>
</gene>
<protein>
    <recommendedName>
        <fullName evidence="1">Bifunctional protein GlmU</fullName>
    </recommendedName>
    <domain>
        <recommendedName>
            <fullName evidence="1">UDP-N-acetylglucosamine pyrophosphorylase</fullName>
            <ecNumber evidence="1">2.7.7.23</ecNumber>
        </recommendedName>
        <alternativeName>
            <fullName evidence="1">N-acetylglucosamine-1-phosphate uridyltransferase</fullName>
        </alternativeName>
    </domain>
    <domain>
        <recommendedName>
            <fullName evidence="1">Glucosamine-1-phosphate N-acetyltransferase</fullName>
            <ecNumber evidence="1">2.3.1.157</ecNumber>
        </recommendedName>
    </domain>
</protein>
<dbReference type="EC" id="2.7.7.23" evidence="1"/>
<dbReference type="EC" id="2.3.1.157" evidence="1"/>
<dbReference type="EMBL" id="CP000010">
    <property type="protein sequence ID" value="AAU48619.1"/>
    <property type="molecule type" value="Genomic_DNA"/>
</dbReference>
<dbReference type="RefSeq" id="WP_004190034.1">
    <property type="nucleotide sequence ID" value="NC_006348.1"/>
</dbReference>
<dbReference type="RefSeq" id="YP_104838.1">
    <property type="nucleotide sequence ID" value="NC_006348.1"/>
</dbReference>
<dbReference type="SMR" id="Q62EP0"/>
<dbReference type="GeneID" id="92981044"/>
<dbReference type="KEGG" id="bma:BMA3380"/>
<dbReference type="PATRIC" id="fig|243160.12.peg.3467"/>
<dbReference type="eggNOG" id="COG1207">
    <property type="taxonomic scope" value="Bacteria"/>
</dbReference>
<dbReference type="HOGENOM" id="CLU_029499_15_2_4"/>
<dbReference type="UniPathway" id="UPA00113">
    <property type="reaction ID" value="UER00532"/>
</dbReference>
<dbReference type="UniPathway" id="UPA00113">
    <property type="reaction ID" value="UER00533"/>
</dbReference>
<dbReference type="UniPathway" id="UPA00973"/>
<dbReference type="Proteomes" id="UP000006693">
    <property type="component" value="Chromosome 1"/>
</dbReference>
<dbReference type="GO" id="GO:0005737">
    <property type="term" value="C:cytoplasm"/>
    <property type="evidence" value="ECO:0007669"/>
    <property type="project" value="UniProtKB-SubCell"/>
</dbReference>
<dbReference type="GO" id="GO:0016020">
    <property type="term" value="C:membrane"/>
    <property type="evidence" value="ECO:0007669"/>
    <property type="project" value="GOC"/>
</dbReference>
<dbReference type="GO" id="GO:0019134">
    <property type="term" value="F:glucosamine-1-phosphate N-acetyltransferase activity"/>
    <property type="evidence" value="ECO:0007669"/>
    <property type="project" value="UniProtKB-UniRule"/>
</dbReference>
<dbReference type="GO" id="GO:0000287">
    <property type="term" value="F:magnesium ion binding"/>
    <property type="evidence" value="ECO:0007669"/>
    <property type="project" value="UniProtKB-UniRule"/>
</dbReference>
<dbReference type="GO" id="GO:0003977">
    <property type="term" value="F:UDP-N-acetylglucosamine diphosphorylase activity"/>
    <property type="evidence" value="ECO:0007669"/>
    <property type="project" value="UniProtKB-UniRule"/>
</dbReference>
<dbReference type="GO" id="GO:0000902">
    <property type="term" value="P:cell morphogenesis"/>
    <property type="evidence" value="ECO:0007669"/>
    <property type="project" value="UniProtKB-UniRule"/>
</dbReference>
<dbReference type="GO" id="GO:0071555">
    <property type="term" value="P:cell wall organization"/>
    <property type="evidence" value="ECO:0007669"/>
    <property type="project" value="UniProtKB-KW"/>
</dbReference>
<dbReference type="GO" id="GO:0009245">
    <property type="term" value="P:lipid A biosynthetic process"/>
    <property type="evidence" value="ECO:0007669"/>
    <property type="project" value="UniProtKB-UniRule"/>
</dbReference>
<dbReference type="GO" id="GO:0009252">
    <property type="term" value="P:peptidoglycan biosynthetic process"/>
    <property type="evidence" value="ECO:0007669"/>
    <property type="project" value="UniProtKB-UniRule"/>
</dbReference>
<dbReference type="GO" id="GO:0008360">
    <property type="term" value="P:regulation of cell shape"/>
    <property type="evidence" value="ECO:0007669"/>
    <property type="project" value="UniProtKB-KW"/>
</dbReference>
<dbReference type="GO" id="GO:0006048">
    <property type="term" value="P:UDP-N-acetylglucosamine biosynthetic process"/>
    <property type="evidence" value="ECO:0007669"/>
    <property type="project" value="UniProtKB-UniPathway"/>
</dbReference>
<dbReference type="CDD" id="cd02540">
    <property type="entry name" value="GT2_GlmU_N_bac"/>
    <property type="match status" value="1"/>
</dbReference>
<dbReference type="CDD" id="cd03353">
    <property type="entry name" value="LbH_GlmU_C"/>
    <property type="match status" value="1"/>
</dbReference>
<dbReference type="Gene3D" id="2.160.10.10">
    <property type="entry name" value="Hexapeptide repeat proteins"/>
    <property type="match status" value="1"/>
</dbReference>
<dbReference type="Gene3D" id="3.90.550.10">
    <property type="entry name" value="Spore Coat Polysaccharide Biosynthesis Protein SpsA, Chain A"/>
    <property type="match status" value="1"/>
</dbReference>
<dbReference type="HAMAP" id="MF_01631">
    <property type="entry name" value="GlmU"/>
    <property type="match status" value="1"/>
</dbReference>
<dbReference type="InterPro" id="IPR005882">
    <property type="entry name" value="Bifunctional_GlmU"/>
</dbReference>
<dbReference type="InterPro" id="IPR050065">
    <property type="entry name" value="GlmU-like"/>
</dbReference>
<dbReference type="InterPro" id="IPR038009">
    <property type="entry name" value="GlmU_C_LbH"/>
</dbReference>
<dbReference type="InterPro" id="IPR001451">
    <property type="entry name" value="Hexapep"/>
</dbReference>
<dbReference type="InterPro" id="IPR025877">
    <property type="entry name" value="MobA-like_NTP_Trfase"/>
</dbReference>
<dbReference type="InterPro" id="IPR029044">
    <property type="entry name" value="Nucleotide-diphossugar_trans"/>
</dbReference>
<dbReference type="InterPro" id="IPR011004">
    <property type="entry name" value="Trimer_LpxA-like_sf"/>
</dbReference>
<dbReference type="NCBIfam" id="TIGR01173">
    <property type="entry name" value="glmU"/>
    <property type="match status" value="1"/>
</dbReference>
<dbReference type="PANTHER" id="PTHR43584:SF3">
    <property type="entry name" value="BIFUNCTIONAL PROTEIN GLMU"/>
    <property type="match status" value="1"/>
</dbReference>
<dbReference type="PANTHER" id="PTHR43584">
    <property type="entry name" value="NUCLEOTIDYL TRANSFERASE"/>
    <property type="match status" value="1"/>
</dbReference>
<dbReference type="Pfam" id="PF00132">
    <property type="entry name" value="Hexapep"/>
    <property type="match status" value="2"/>
</dbReference>
<dbReference type="Pfam" id="PF12804">
    <property type="entry name" value="NTP_transf_3"/>
    <property type="match status" value="1"/>
</dbReference>
<dbReference type="SUPFAM" id="SSF53448">
    <property type="entry name" value="Nucleotide-diphospho-sugar transferases"/>
    <property type="match status" value="1"/>
</dbReference>
<dbReference type="SUPFAM" id="SSF51161">
    <property type="entry name" value="Trimeric LpxA-like enzymes"/>
    <property type="match status" value="1"/>
</dbReference>
<evidence type="ECO:0000255" key="1">
    <source>
        <dbReference type="HAMAP-Rule" id="MF_01631"/>
    </source>
</evidence>
<reference key="1">
    <citation type="journal article" date="2004" name="Proc. Natl. Acad. Sci. U.S.A.">
        <title>Structural flexibility in the Burkholderia mallei genome.</title>
        <authorList>
            <person name="Nierman W.C."/>
            <person name="DeShazer D."/>
            <person name="Kim H.S."/>
            <person name="Tettelin H."/>
            <person name="Nelson K.E."/>
            <person name="Feldblyum T.V."/>
            <person name="Ulrich R.L."/>
            <person name="Ronning C.M."/>
            <person name="Brinkac L.M."/>
            <person name="Daugherty S.C."/>
            <person name="Davidsen T.D."/>
            <person name="DeBoy R.T."/>
            <person name="Dimitrov G."/>
            <person name="Dodson R.J."/>
            <person name="Durkin A.S."/>
            <person name="Gwinn M.L."/>
            <person name="Haft D.H."/>
            <person name="Khouri H.M."/>
            <person name="Kolonay J.F."/>
            <person name="Madupu R."/>
            <person name="Mohammoud Y."/>
            <person name="Nelson W.C."/>
            <person name="Radune D."/>
            <person name="Romero C.M."/>
            <person name="Sarria S."/>
            <person name="Selengut J."/>
            <person name="Shamblin C."/>
            <person name="Sullivan S.A."/>
            <person name="White O."/>
            <person name="Yu Y."/>
            <person name="Zafar N."/>
            <person name="Zhou L."/>
            <person name="Fraser C.M."/>
        </authorList>
    </citation>
    <scope>NUCLEOTIDE SEQUENCE [LARGE SCALE GENOMIC DNA]</scope>
    <source>
        <strain>ATCC 23344</strain>
    </source>
</reference>
<feature type="chain" id="PRO_0000233747" description="Bifunctional protein GlmU">
    <location>
        <begin position="1"/>
        <end position="453"/>
    </location>
</feature>
<feature type="region of interest" description="Pyrophosphorylase" evidence="1">
    <location>
        <begin position="1"/>
        <end position="225"/>
    </location>
</feature>
<feature type="region of interest" description="Linker" evidence="1">
    <location>
        <begin position="226"/>
        <end position="246"/>
    </location>
</feature>
<feature type="region of interest" description="N-acetyltransferase" evidence="1">
    <location>
        <begin position="247"/>
        <end position="453"/>
    </location>
</feature>
<feature type="active site" description="Proton acceptor" evidence="1">
    <location>
        <position position="359"/>
    </location>
</feature>
<feature type="binding site" evidence="1">
    <location>
        <begin position="6"/>
        <end position="9"/>
    </location>
    <ligand>
        <name>UDP-N-acetyl-alpha-D-glucosamine</name>
        <dbReference type="ChEBI" id="CHEBI:57705"/>
    </ligand>
</feature>
<feature type="binding site" evidence="1">
    <location>
        <position position="20"/>
    </location>
    <ligand>
        <name>UDP-N-acetyl-alpha-D-glucosamine</name>
        <dbReference type="ChEBI" id="CHEBI:57705"/>
    </ligand>
</feature>
<feature type="binding site" evidence="1">
    <location>
        <position position="71"/>
    </location>
    <ligand>
        <name>UDP-N-acetyl-alpha-D-glucosamine</name>
        <dbReference type="ChEBI" id="CHEBI:57705"/>
    </ligand>
</feature>
<feature type="binding site" evidence="1">
    <location>
        <begin position="76"/>
        <end position="77"/>
    </location>
    <ligand>
        <name>UDP-N-acetyl-alpha-D-glucosamine</name>
        <dbReference type="ChEBI" id="CHEBI:57705"/>
    </ligand>
</feature>
<feature type="binding site" evidence="1">
    <location>
        <begin position="98"/>
        <end position="100"/>
    </location>
    <ligand>
        <name>UDP-N-acetyl-alpha-D-glucosamine</name>
        <dbReference type="ChEBI" id="CHEBI:57705"/>
    </ligand>
</feature>
<feature type="binding site" evidence="1">
    <location>
        <position position="100"/>
    </location>
    <ligand>
        <name>Mg(2+)</name>
        <dbReference type="ChEBI" id="CHEBI:18420"/>
    </ligand>
</feature>
<feature type="binding site" evidence="1">
    <location>
        <position position="135"/>
    </location>
    <ligand>
        <name>UDP-N-acetyl-alpha-D-glucosamine</name>
        <dbReference type="ChEBI" id="CHEBI:57705"/>
    </ligand>
</feature>
<feature type="binding site" evidence="1">
    <location>
        <position position="150"/>
    </location>
    <ligand>
        <name>UDP-N-acetyl-alpha-D-glucosamine</name>
        <dbReference type="ChEBI" id="CHEBI:57705"/>
    </ligand>
</feature>
<feature type="binding site" evidence="1">
    <location>
        <position position="165"/>
    </location>
    <ligand>
        <name>UDP-N-acetyl-alpha-D-glucosamine</name>
        <dbReference type="ChEBI" id="CHEBI:57705"/>
    </ligand>
</feature>
<feature type="binding site" evidence="1">
    <location>
        <position position="223"/>
    </location>
    <ligand>
        <name>Mg(2+)</name>
        <dbReference type="ChEBI" id="CHEBI:18420"/>
    </ligand>
</feature>
<feature type="binding site" evidence="1">
    <location>
        <position position="223"/>
    </location>
    <ligand>
        <name>UDP-N-acetyl-alpha-D-glucosamine</name>
        <dbReference type="ChEBI" id="CHEBI:57705"/>
    </ligand>
</feature>
<feature type="binding site" evidence="1">
    <location>
        <position position="329"/>
    </location>
    <ligand>
        <name>UDP-N-acetyl-alpha-D-glucosamine</name>
        <dbReference type="ChEBI" id="CHEBI:57705"/>
    </ligand>
</feature>
<feature type="binding site" evidence="1">
    <location>
        <position position="347"/>
    </location>
    <ligand>
        <name>UDP-N-acetyl-alpha-D-glucosamine</name>
        <dbReference type="ChEBI" id="CHEBI:57705"/>
    </ligand>
</feature>
<feature type="binding site" evidence="1">
    <location>
        <position position="362"/>
    </location>
    <ligand>
        <name>UDP-N-acetyl-alpha-D-glucosamine</name>
        <dbReference type="ChEBI" id="CHEBI:57705"/>
    </ligand>
</feature>
<feature type="binding site" evidence="1">
    <location>
        <position position="373"/>
    </location>
    <ligand>
        <name>UDP-N-acetyl-alpha-D-glucosamine</name>
        <dbReference type="ChEBI" id="CHEBI:57705"/>
    </ligand>
</feature>
<feature type="binding site" evidence="1">
    <location>
        <position position="376"/>
    </location>
    <ligand>
        <name>acetyl-CoA</name>
        <dbReference type="ChEBI" id="CHEBI:57288"/>
    </ligand>
</feature>
<feature type="binding site" evidence="1">
    <location>
        <begin position="382"/>
        <end position="383"/>
    </location>
    <ligand>
        <name>acetyl-CoA</name>
        <dbReference type="ChEBI" id="CHEBI:57288"/>
    </ligand>
</feature>
<feature type="binding site" evidence="1">
    <location>
        <position position="401"/>
    </location>
    <ligand>
        <name>acetyl-CoA</name>
        <dbReference type="ChEBI" id="CHEBI:57288"/>
    </ligand>
</feature>
<feature type="binding site" evidence="1">
    <location>
        <position position="419"/>
    </location>
    <ligand>
        <name>acetyl-CoA</name>
        <dbReference type="ChEBI" id="CHEBI:57288"/>
    </ligand>
</feature>
<proteinExistence type="inferred from homology"/>
<organism>
    <name type="scientific">Burkholderia mallei (strain ATCC 23344)</name>
    <dbReference type="NCBI Taxonomy" id="243160"/>
    <lineage>
        <taxon>Bacteria</taxon>
        <taxon>Pseudomonadati</taxon>
        <taxon>Pseudomonadota</taxon>
        <taxon>Betaproteobacteria</taxon>
        <taxon>Burkholderiales</taxon>
        <taxon>Burkholderiaceae</taxon>
        <taxon>Burkholderia</taxon>
        <taxon>pseudomallei group</taxon>
    </lineage>
</organism>
<keyword id="KW-0012">Acyltransferase</keyword>
<keyword id="KW-0133">Cell shape</keyword>
<keyword id="KW-0961">Cell wall biogenesis/degradation</keyword>
<keyword id="KW-0963">Cytoplasm</keyword>
<keyword id="KW-0460">Magnesium</keyword>
<keyword id="KW-0479">Metal-binding</keyword>
<keyword id="KW-0511">Multifunctional enzyme</keyword>
<keyword id="KW-0548">Nucleotidyltransferase</keyword>
<keyword id="KW-0573">Peptidoglycan synthesis</keyword>
<keyword id="KW-1185">Reference proteome</keyword>
<keyword id="KW-0677">Repeat</keyword>
<keyword id="KW-0808">Transferase</keyword>
<name>GLMU_BURMA</name>
<comment type="function">
    <text evidence="1">Catalyzes the last two sequential reactions in the de novo biosynthetic pathway for UDP-N-acetylglucosamine (UDP-GlcNAc). The C-terminal domain catalyzes the transfer of acetyl group from acetyl coenzyme A to glucosamine-1-phosphate (GlcN-1-P) to produce N-acetylglucosamine-1-phosphate (GlcNAc-1-P), which is converted into UDP-GlcNAc by the transfer of uridine 5-monophosphate (from uridine 5-triphosphate), a reaction catalyzed by the N-terminal domain.</text>
</comment>
<comment type="catalytic activity">
    <reaction evidence="1">
        <text>alpha-D-glucosamine 1-phosphate + acetyl-CoA = N-acetyl-alpha-D-glucosamine 1-phosphate + CoA + H(+)</text>
        <dbReference type="Rhea" id="RHEA:13725"/>
        <dbReference type="ChEBI" id="CHEBI:15378"/>
        <dbReference type="ChEBI" id="CHEBI:57287"/>
        <dbReference type="ChEBI" id="CHEBI:57288"/>
        <dbReference type="ChEBI" id="CHEBI:57776"/>
        <dbReference type="ChEBI" id="CHEBI:58516"/>
        <dbReference type="EC" id="2.3.1.157"/>
    </reaction>
</comment>
<comment type="catalytic activity">
    <reaction evidence="1">
        <text>N-acetyl-alpha-D-glucosamine 1-phosphate + UTP + H(+) = UDP-N-acetyl-alpha-D-glucosamine + diphosphate</text>
        <dbReference type="Rhea" id="RHEA:13509"/>
        <dbReference type="ChEBI" id="CHEBI:15378"/>
        <dbReference type="ChEBI" id="CHEBI:33019"/>
        <dbReference type="ChEBI" id="CHEBI:46398"/>
        <dbReference type="ChEBI" id="CHEBI:57705"/>
        <dbReference type="ChEBI" id="CHEBI:57776"/>
        <dbReference type="EC" id="2.7.7.23"/>
    </reaction>
</comment>
<comment type="cofactor">
    <cofactor evidence="1">
        <name>Mg(2+)</name>
        <dbReference type="ChEBI" id="CHEBI:18420"/>
    </cofactor>
    <text evidence="1">Binds 1 Mg(2+) ion per subunit.</text>
</comment>
<comment type="pathway">
    <text evidence="1">Nucleotide-sugar biosynthesis; UDP-N-acetyl-alpha-D-glucosamine biosynthesis; N-acetyl-alpha-D-glucosamine 1-phosphate from alpha-D-glucosamine 6-phosphate (route II): step 2/2.</text>
</comment>
<comment type="pathway">
    <text evidence="1">Nucleotide-sugar biosynthesis; UDP-N-acetyl-alpha-D-glucosamine biosynthesis; UDP-N-acetyl-alpha-D-glucosamine from N-acetyl-alpha-D-glucosamine 1-phosphate: step 1/1.</text>
</comment>
<comment type="pathway">
    <text evidence="1">Bacterial outer membrane biogenesis; LPS lipid A biosynthesis.</text>
</comment>
<comment type="subunit">
    <text evidence="1">Homotrimer.</text>
</comment>
<comment type="subcellular location">
    <subcellularLocation>
        <location evidence="1">Cytoplasm</location>
    </subcellularLocation>
</comment>
<comment type="similarity">
    <text evidence="1">In the N-terminal section; belongs to the N-acetylglucosamine-1-phosphate uridyltransferase family.</text>
</comment>
<comment type="similarity">
    <text evidence="1">In the C-terminal section; belongs to the transferase hexapeptide repeat family.</text>
</comment>